<protein>
    <recommendedName>
        <fullName>Neurotoxin-1''</fullName>
    </recommendedName>
    <alternativeName>
        <fullName>AaH I''</fullName>
        <shortName>AaHI''</shortName>
    </alternativeName>
    <alternativeName>
        <fullName>Neurotoxin I''</fullName>
    </alternativeName>
    <component>
        <recommendedName>
            <fullName>Neurotoxin-1/1'</fullName>
        </recommendedName>
        <alternativeName>
            <fullName evidence="4">AaH I/AaH I'</fullName>
            <shortName>AaHI/AaHI'</shortName>
        </alternativeName>
        <alternativeName>
            <fullName>Neurotoxin I/I'</fullName>
        </alternativeName>
    </component>
</protein>
<dbReference type="EMBL" id="M27701">
    <property type="protein sequence ID" value="AAA29946.1"/>
    <property type="molecule type" value="mRNA"/>
</dbReference>
<dbReference type="EMBL" id="M27702">
    <property type="protein sequence ID" value="AAA29947.1"/>
    <property type="molecule type" value="mRNA"/>
</dbReference>
<dbReference type="EMBL" id="X76135">
    <property type="protein sequence ID" value="CAA53740.1"/>
    <property type="molecule type" value="Genomic_DNA"/>
</dbReference>
<dbReference type="PIR" id="A34444">
    <property type="entry name" value="NTSRIA"/>
</dbReference>
<dbReference type="PIR" id="B34444">
    <property type="entry name" value="NTSRI2"/>
</dbReference>
<dbReference type="SMR" id="P01479"/>
<dbReference type="ABCD" id="P01479">
    <property type="antibodies" value="15 sequenced antibodies"/>
</dbReference>
<dbReference type="GO" id="GO:0005576">
    <property type="term" value="C:extracellular region"/>
    <property type="evidence" value="ECO:0007669"/>
    <property type="project" value="UniProtKB-SubCell"/>
</dbReference>
<dbReference type="GO" id="GO:0019871">
    <property type="term" value="F:sodium channel inhibitor activity"/>
    <property type="evidence" value="ECO:0007669"/>
    <property type="project" value="InterPro"/>
</dbReference>
<dbReference type="GO" id="GO:0090729">
    <property type="term" value="F:toxin activity"/>
    <property type="evidence" value="ECO:0007669"/>
    <property type="project" value="UniProtKB-KW"/>
</dbReference>
<dbReference type="GO" id="GO:0006952">
    <property type="term" value="P:defense response"/>
    <property type="evidence" value="ECO:0007669"/>
    <property type="project" value="InterPro"/>
</dbReference>
<dbReference type="CDD" id="cd23106">
    <property type="entry name" value="neurotoxins_LC_scorpion"/>
    <property type="match status" value="1"/>
</dbReference>
<dbReference type="Gene3D" id="3.30.30.10">
    <property type="entry name" value="Knottin, scorpion toxin-like"/>
    <property type="match status" value="1"/>
</dbReference>
<dbReference type="InterPro" id="IPR044062">
    <property type="entry name" value="LCN-type_CS_alpha_beta_dom"/>
</dbReference>
<dbReference type="InterPro" id="IPR003614">
    <property type="entry name" value="Scorpion_toxin-like"/>
</dbReference>
<dbReference type="InterPro" id="IPR036574">
    <property type="entry name" value="Scorpion_toxin-like_sf"/>
</dbReference>
<dbReference type="InterPro" id="IPR018218">
    <property type="entry name" value="Scorpion_toxinL"/>
</dbReference>
<dbReference type="InterPro" id="IPR002061">
    <property type="entry name" value="Scorpion_toxinL/defensin"/>
</dbReference>
<dbReference type="Pfam" id="PF00537">
    <property type="entry name" value="Toxin_3"/>
    <property type="match status" value="1"/>
</dbReference>
<dbReference type="PRINTS" id="PR00285">
    <property type="entry name" value="SCORPNTOXIN"/>
</dbReference>
<dbReference type="SMART" id="SM00505">
    <property type="entry name" value="Knot1"/>
    <property type="match status" value="1"/>
</dbReference>
<dbReference type="SUPFAM" id="SSF57095">
    <property type="entry name" value="Scorpion toxin-like"/>
    <property type="match status" value="1"/>
</dbReference>
<dbReference type="PROSITE" id="PS51863">
    <property type="entry name" value="LCN_CSAB"/>
    <property type="match status" value="1"/>
</dbReference>
<name>SCX1_ANDAU</name>
<keyword id="KW-0903">Direct protein sequencing</keyword>
<keyword id="KW-1015">Disulfide bond</keyword>
<keyword id="KW-0872">Ion channel impairing toxin</keyword>
<keyword id="KW-0528">Neurotoxin</keyword>
<keyword id="KW-0964">Secreted</keyword>
<keyword id="KW-0732">Signal</keyword>
<keyword id="KW-0800">Toxin</keyword>
<keyword id="KW-0738">Voltage-gated sodium channel impairing toxin</keyword>
<feature type="signal peptide" evidence="2 3">
    <location>
        <begin position="1"/>
        <end position="19"/>
    </location>
</feature>
<feature type="chain" id="PRO_0000035217" description="Neurotoxin-1''">
    <location>
        <begin position="20"/>
        <end position="83"/>
    </location>
</feature>
<feature type="chain" id="PRO_0000035218" description="Neurotoxin-1/1'">
    <location>
        <begin position="20"/>
        <end position="82"/>
    </location>
</feature>
<feature type="propeptide" id="PRO_0000035219" description="Removed by a carboxypeptidase (in neurotoxin-1/1')">
    <location>
        <position position="83"/>
    </location>
</feature>
<feature type="domain" description="LCN-type CS-alpha/beta" evidence="1">
    <location>
        <begin position="21"/>
        <end position="82"/>
    </location>
</feature>
<feature type="disulfide bond" evidence="1">
    <location>
        <begin position="31"/>
        <end position="81"/>
    </location>
</feature>
<feature type="disulfide bond" evidence="1">
    <location>
        <begin position="35"/>
        <end position="53"/>
    </location>
</feature>
<feature type="disulfide bond" evidence="1">
    <location>
        <begin position="39"/>
        <end position="63"/>
    </location>
</feature>
<feature type="disulfide bond" evidence="1">
    <location>
        <begin position="43"/>
        <end position="65"/>
    </location>
</feature>
<feature type="sequence variant" description="In neurotoxin-1'.">
    <original>V</original>
    <variation>I</variation>
    <location>
        <position position="36"/>
    </location>
</feature>
<accession>P01479</accession>
<sequence length="83" mass="9061">MNYLVMISLALLLMIGVESKRDGYIVYPNNCVYHCVPPCDGLCKKNGGSSGSCSFLVPSGLACWCKDLPDNVPIKDTSRKCTR</sequence>
<organism>
    <name type="scientific">Androctonus australis</name>
    <name type="common">Sahara scorpion</name>
    <dbReference type="NCBI Taxonomy" id="6858"/>
    <lineage>
        <taxon>Eukaryota</taxon>
        <taxon>Metazoa</taxon>
        <taxon>Ecdysozoa</taxon>
        <taxon>Arthropoda</taxon>
        <taxon>Chelicerata</taxon>
        <taxon>Arachnida</taxon>
        <taxon>Scorpiones</taxon>
        <taxon>Buthida</taxon>
        <taxon>Buthoidea</taxon>
        <taxon>Buthidae</taxon>
        <taxon>Androctonus</taxon>
    </lineage>
</organism>
<proteinExistence type="evidence at protein level"/>
<evidence type="ECO:0000255" key="1">
    <source>
        <dbReference type="PROSITE-ProRule" id="PRU01210"/>
    </source>
</evidence>
<evidence type="ECO:0000269" key="2">
    <source>
    </source>
</evidence>
<evidence type="ECO:0000269" key="3">
    <source>
    </source>
</evidence>
<evidence type="ECO:0000303" key="4">
    <source>
    </source>
</evidence>
<evidence type="ECO:0000305" key="5"/>
<comment type="function">
    <text>Alpha toxins bind voltage-independently at site-3 of sodium channels (Nav) and inhibit the inactivation of the activated channels, thereby blocking neuronal transmission. Is active against mammals and binds with high affinity rat brain synaptosomes.</text>
</comment>
<comment type="subcellular location">
    <subcellularLocation>
        <location>Secreted</location>
    </subcellularLocation>
</comment>
<comment type="tissue specificity">
    <text>Expressed by the venom gland.</text>
</comment>
<comment type="domain">
    <text evidence="5">Has the structural arrangement of an alpha-helix connected to antiparallel beta-sheets by disulfide bonds (CS-alpha/beta).</text>
</comment>
<comment type="similarity">
    <text evidence="5">Belongs to the long (4 C-C) scorpion toxin superfamily. Sodium channel inhibitor family. Alpha subfamily.</text>
</comment>
<reference key="1">
    <citation type="journal article" date="1989" name="J. Biol. Chem.">
        <title>Precursors of Androctonus australis scorpion neurotoxins. Structures of precursors, processing outcomes, and expression of a functional recombinant toxin II.</title>
        <authorList>
            <person name="Bougis P.E."/>
            <person name="Rochat H."/>
            <person name="Smith L.A."/>
        </authorList>
    </citation>
    <scope>NUCLEOTIDE SEQUENCE [MRNA] (AAH I AND AAH I')</scope>
    <source>
        <strain>Hector</strain>
    </source>
</reference>
<reference key="2">
    <citation type="journal article" date="1995" name="Biochemistry">
        <title>Promoter structure and intron-exon organization of a scorpion alpha-toxin gene.</title>
        <authorList>
            <person name="Delabre M.-L."/>
            <person name="Pasero P."/>
            <person name="Marilley M."/>
            <person name="Bougis P.E."/>
        </authorList>
    </citation>
    <scope>NUCLEOTIDE SEQUENCE [GENOMIC DNA] (AAH I')</scope>
    <source>
        <strain>Hector</strain>
    </source>
</reference>
<reference key="3">
    <citation type="journal article" date="1970" name="Eur. J. Biochem.">
        <title>The amino acid sequence of neurotoxin I of Androctonus australis hector.</title>
        <authorList>
            <person name="Rochat H."/>
            <person name="Rochat C."/>
            <person name="Miranda F."/>
            <person name="Lissitzky S."/>
            <person name="Edman P."/>
        </authorList>
    </citation>
    <scope>PROTEIN SEQUENCE OF 20-82 (AAH I)</scope>
    <source>
        <strain>Hector</strain>
        <tissue>Venom</tissue>
    </source>
</reference>
<reference key="4">
    <citation type="journal article" date="1984" name="Toxicon">
        <title>Purification and amino acid sequence of toxin I' from the venom of the North African scorpion Androctonus australis hector.</title>
        <authorList>
            <person name="Martin M.-F."/>
            <person name="Rochat H."/>
        </authorList>
    </citation>
    <scope>PROTEIN SEQUENCE OF 20-83 (AAH I'')</scope>
    <source>
        <strain>Hector</strain>
        <tissue>Venom</tissue>
    </source>
</reference>